<organism>
    <name type="scientific">Rubrobacter xylanophilus (strain DSM 9941 / JCM 11954 / NBRC 16129 / PRD-1)</name>
    <dbReference type="NCBI Taxonomy" id="266117"/>
    <lineage>
        <taxon>Bacteria</taxon>
        <taxon>Bacillati</taxon>
        <taxon>Actinomycetota</taxon>
        <taxon>Rubrobacteria</taxon>
        <taxon>Rubrobacterales</taxon>
        <taxon>Rubrobacteraceae</taxon>
        <taxon>Rubrobacter</taxon>
    </lineage>
</organism>
<gene>
    <name evidence="1" type="primary">atpG</name>
    <name type="ordered locus">Rxyl_1639</name>
</gene>
<protein>
    <recommendedName>
        <fullName evidence="1">ATP synthase gamma chain</fullName>
    </recommendedName>
    <alternativeName>
        <fullName evidence="1">ATP synthase F1 sector gamma subunit</fullName>
    </alternativeName>
    <alternativeName>
        <fullName evidence="1">F-ATPase gamma subunit</fullName>
    </alternativeName>
</protein>
<feature type="chain" id="PRO_1000053319" description="ATP synthase gamma chain">
    <location>
        <begin position="1"/>
        <end position="290"/>
    </location>
</feature>
<proteinExistence type="inferred from homology"/>
<dbReference type="EMBL" id="CP000386">
    <property type="protein sequence ID" value="ABG04600.1"/>
    <property type="molecule type" value="Genomic_DNA"/>
</dbReference>
<dbReference type="RefSeq" id="WP_011564617.1">
    <property type="nucleotide sequence ID" value="NC_008148.1"/>
</dbReference>
<dbReference type="SMR" id="Q1AVH8"/>
<dbReference type="STRING" id="266117.Rxyl_1639"/>
<dbReference type="KEGG" id="rxy:Rxyl_1639"/>
<dbReference type="eggNOG" id="COG0224">
    <property type="taxonomic scope" value="Bacteria"/>
</dbReference>
<dbReference type="HOGENOM" id="CLU_050669_0_1_11"/>
<dbReference type="OrthoDB" id="9812769at2"/>
<dbReference type="PhylomeDB" id="Q1AVH8"/>
<dbReference type="Proteomes" id="UP000006637">
    <property type="component" value="Chromosome"/>
</dbReference>
<dbReference type="GO" id="GO:0005886">
    <property type="term" value="C:plasma membrane"/>
    <property type="evidence" value="ECO:0007669"/>
    <property type="project" value="UniProtKB-SubCell"/>
</dbReference>
<dbReference type="GO" id="GO:0045259">
    <property type="term" value="C:proton-transporting ATP synthase complex"/>
    <property type="evidence" value="ECO:0007669"/>
    <property type="project" value="UniProtKB-KW"/>
</dbReference>
<dbReference type="GO" id="GO:0005524">
    <property type="term" value="F:ATP binding"/>
    <property type="evidence" value="ECO:0007669"/>
    <property type="project" value="UniProtKB-UniRule"/>
</dbReference>
<dbReference type="GO" id="GO:0046933">
    <property type="term" value="F:proton-transporting ATP synthase activity, rotational mechanism"/>
    <property type="evidence" value="ECO:0007669"/>
    <property type="project" value="UniProtKB-UniRule"/>
</dbReference>
<dbReference type="GO" id="GO:0042777">
    <property type="term" value="P:proton motive force-driven plasma membrane ATP synthesis"/>
    <property type="evidence" value="ECO:0007669"/>
    <property type="project" value="UniProtKB-UniRule"/>
</dbReference>
<dbReference type="CDD" id="cd12151">
    <property type="entry name" value="F1-ATPase_gamma"/>
    <property type="match status" value="1"/>
</dbReference>
<dbReference type="Gene3D" id="3.40.1380.10">
    <property type="match status" value="1"/>
</dbReference>
<dbReference type="Gene3D" id="1.10.287.80">
    <property type="entry name" value="ATP synthase, gamma subunit, helix hairpin domain"/>
    <property type="match status" value="1"/>
</dbReference>
<dbReference type="HAMAP" id="MF_00815">
    <property type="entry name" value="ATP_synth_gamma_bact"/>
    <property type="match status" value="1"/>
</dbReference>
<dbReference type="InterPro" id="IPR035968">
    <property type="entry name" value="ATP_synth_F1_ATPase_gsu"/>
</dbReference>
<dbReference type="InterPro" id="IPR000131">
    <property type="entry name" value="ATP_synth_F1_gsu"/>
</dbReference>
<dbReference type="InterPro" id="IPR023632">
    <property type="entry name" value="ATP_synth_F1_gsu_CS"/>
</dbReference>
<dbReference type="NCBIfam" id="TIGR01146">
    <property type="entry name" value="ATPsyn_F1gamma"/>
    <property type="match status" value="1"/>
</dbReference>
<dbReference type="PANTHER" id="PTHR11693">
    <property type="entry name" value="ATP SYNTHASE GAMMA CHAIN"/>
    <property type="match status" value="1"/>
</dbReference>
<dbReference type="PANTHER" id="PTHR11693:SF22">
    <property type="entry name" value="ATP SYNTHASE SUBUNIT GAMMA, MITOCHONDRIAL"/>
    <property type="match status" value="1"/>
</dbReference>
<dbReference type="Pfam" id="PF00231">
    <property type="entry name" value="ATP-synt"/>
    <property type="match status" value="1"/>
</dbReference>
<dbReference type="PRINTS" id="PR00126">
    <property type="entry name" value="ATPASEGAMMA"/>
</dbReference>
<dbReference type="SUPFAM" id="SSF52943">
    <property type="entry name" value="ATP synthase (F1-ATPase), gamma subunit"/>
    <property type="match status" value="1"/>
</dbReference>
<dbReference type="PROSITE" id="PS00153">
    <property type="entry name" value="ATPASE_GAMMA"/>
    <property type="match status" value="1"/>
</dbReference>
<comment type="function">
    <text evidence="1">Produces ATP from ADP in the presence of a proton gradient across the membrane. The gamma chain is believed to be important in regulating ATPase activity and the flow of protons through the CF(0) complex.</text>
</comment>
<comment type="subunit">
    <text evidence="1">F-type ATPases have 2 components, CF(1) - the catalytic core - and CF(0) - the membrane proton channel. CF(1) has five subunits: alpha(3), beta(3), gamma(1), delta(1), epsilon(1). CF(0) has three main subunits: a, b and c.</text>
</comment>
<comment type="subcellular location">
    <subcellularLocation>
        <location evidence="1">Cell membrane</location>
        <topology evidence="1">Peripheral membrane protein</topology>
    </subcellularLocation>
</comment>
<comment type="similarity">
    <text evidence="1">Belongs to the ATPase gamma chain family.</text>
</comment>
<evidence type="ECO:0000255" key="1">
    <source>
        <dbReference type="HAMAP-Rule" id="MF_00815"/>
    </source>
</evidence>
<name>ATPG_RUBXD</name>
<accession>Q1AVH8</accession>
<sequence>MASLRDLKRQIQSVKNIAKVTDALQAVSAVKFRKAEARVKQARPYAENMEEVMRAIASKASTRNPMLAGREQVRRVAVATLTSDRGLCGSFNAQVLRRTVRFREQQGAEALQVASGRKGIAFFRFRRIGLAESYSGFTDDPSYEDAQRIGRGLTRLFEREEADEVYLVYNRFVNPAVQRPVVVRLLPAAPEGGEEGEGGTVSGAPFDFIPDADTILRRLIPQYVETLVWQALLESAAGEHGARMTAMKNATDNANELVDTLTLQMNKARQAQITREISEIAAGAEALAAG</sequence>
<reference key="1">
    <citation type="submission" date="2006-06" db="EMBL/GenBank/DDBJ databases">
        <title>Complete sequence of Rubrobacter xylanophilus DSM 9941.</title>
        <authorList>
            <consortium name="US DOE Joint Genome Institute"/>
            <person name="Copeland A."/>
            <person name="Lucas S."/>
            <person name="Lapidus A."/>
            <person name="Barry K."/>
            <person name="Detter J.C."/>
            <person name="Glavina del Rio T."/>
            <person name="Hammon N."/>
            <person name="Israni S."/>
            <person name="Dalin E."/>
            <person name="Tice H."/>
            <person name="Pitluck S."/>
            <person name="Munk A.C."/>
            <person name="Brettin T."/>
            <person name="Bruce D."/>
            <person name="Han C."/>
            <person name="Tapia R."/>
            <person name="Gilna P."/>
            <person name="Schmutz J."/>
            <person name="Larimer F."/>
            <person name="Land M."/>
            <person name="Hauser L."/>
            <person name="Kyrpides N."/>
            <person name="Lykidis A."/>
            <person name="da Costa M.S."/>
            <person name="Rainey F.A."/>
            <person name="Empadinhas N."/>
            <person name="Jolivet E."/>
            <person name="Battista J.R."/>
            <person name="Richardson P."/>
        </authorList>
    </citation>
    <scope>NUCLEOTIDE SEQUENCE [LARGE SCALE GENOMIC DNA]</scope>
    <source>
        <strain>DSM 9941 / JCM 11954 / NBRC 16129 / PRD-1</strain>
    </source>
</reference>
<keyword id="KW-0066">ATP synthesis</keyword>
<keyword id="KW-1003">Cell membrane</keyword>
<keyword id="KW-0139">CF(1)</keyword>
<keyword id="KW-0375">Hydrogen ion transport</keyword>
<keyword id="KW-0406">Ion transport</keyword>
<keyword id="KW-0472">Membrane</keyword>
<keyword id="KW-1185">Reference proteome</keyword>
<keyword id="KW-0813">Transport</keyword>